<protein>
    <recommendedName>
        <fullName evidence="1">Eukaryotic translation initiation factor 3 subunit M</fullName>
        <shortName evidence="1">eIF3m</shortName>
    </recommendedName>
    <alternativeName>
        <fullName evidence="1">Transport and Golgi organization protein 7</fullName>
        <shortName evidence="1">Tango-7</shortName>
    </alternativeName>
</protein>
<proteinExistence type="inferred from homology"/>
<comment type="function">
    <text evidence="1">Component of the eukaryotic translation initiation factor 3 (eIF-3) complex, which is involved in protein synthesis of a specialized repertoire of mRNAs and, together with other initiation factors, stimulates binding of mRNA and methionyl-tRNAi to the 40S ribosome. The eIF-3 complex specifically targets and initiates translation of a subset of mRNAs involved in cell proliferation.</text>
</comment>
<comment type="subunit">
    <text evidence="1">Component of the eukaryotic translation initiation factor 3 (eIF-3) complex. The eIF-3 complex interacts with pix.</text>
</comment>
<comment type="subcellular location">
    <subcellularLocation>
        <location evidence="1">Cytoplasm</location>
    </subcellularLocation>
    <subcellularLocation>
        <location evidence="1">Golgi apparatus</location>
    </subcellularLocation>
</comment>
<comment type="similarity">
    <text evidence="1">Belongs to the eIF-3 subunit M family.</text>
</comment>
<keyword id="KW-0963">Cytoplasm</keyword>
<keyword id="KW-0333">Golgi apparatus</keyword>
<keyword id="KW-0396">Initiation factor</keyword>
<keyword id="KW-0648">Protein biosynthesis</keyword>
<keyword id="KW-1185">Reference proteome</keyword>
<evidence type="ECO:0000255" key="1">
    <source>
        <dbReference type="HAMAP-Rule" id="MF_03012"/>
    </source>
</evidence>
<evidence type="ECO:0000255" key="2">
    <source>
        <dbReference type="PROSITE-ProRule" id="PRU01185"/>
    </source>
</evidence>
<gene>
    <name evidence="1" type="primary">Tango7</name>
    <name type="ORF">GI18957</name>
</gene>
<sequence>MTSHPVFIDLSLDEQVQELRKYFKKLGAEISSEKSNKGVEDDLHKIIGVCEVCFKDGEPAQIDGILNSIVSIMITIPLDRGENIVLAYCEKMTKAPNQPLAKVCLQSLWRLFNNLDTASPLRYHVYYHLVQVAKQCDQVLEVFTGVDQLKSQFANCPPSSEQMQKLYRLLHDVTKDTNLELSSKVMIELLGTYTADNACVAREDAMKCIVTALADPNTFLLDPLLSLKPVRFLEGDLIHDLLSIFVSDKLPSYVQFYEDHKEFVNSQGLNHEQNMKKMRLLTFMQLAESYPEMTFDTLTKELQINEDEVEPFVIEVLKTKLVRARLDQANRKVHISSTMHRTFGAPQWEQLRDLLQAWKENLSSVREGLTNVSSAQLDLARSQKLIH</sequence>
<dbReference type="EMBL" id="CH933808">
    <property type="protein sequence ID" value="EDW09585.1"/>
    <property type="molecule type" value="Genomic_DNA"/>
</dbReference>
<dbReference type="SMR" id="B4KT65"/>
<dbReference type="FunCoup" id="B4KT65">
    <property type="interactions" value="2278"/>
</dbReference>
<dbReference type="EnsemblMetazoa" id="FBtr0169682">
    <property type="protein sequence ID" value="FBpp0168174"/>
    <property type="gene ID" value="FBgn0141696"/>
</dbReference>
<dbReference type="EnsemblMetazoa" id="XM_002005614.4">
    <property type="protein sequence ID" value="XP_002005650.1"/>
    <property type="gene ID" value="LOC6579771"/>
</dbReference>
<dbReference type="GeneID" id="6579771"/>
<dbReference type="KEGG" id="dmo:Dmoj_GI18957"/>
<dbReference type="CTD" id="10480"/>
<dbReference type="eggNOG" id="KOG2753">
    <property type="taxonomic scope" value="Eukaryota"/>
</dbReference>
<dbReference type="HOGENOM" id="CLU_035254_1_0_1"/>
<dbReference type="InParanoid" id="B4KT65"/>
<dbReference type="OMA" id="VCLKALW"/>
<dbReference type="OrthoDB" id="7900529at2759"/>
<dbReference type="PhylomeDB" id="B4KT65"/>
<dbReference type="Proteomes" id="UP000009192">
    <property type="component" value="Unassembled WGS sequence"/>
</dbReference>
<dbReference type="GO" id="GO:0016282">
    <property type="term" value="C:eukaryotic 43S preinitiation complex"/>
    <property type="evidence" value="ECO:0007669"/>
    <property type="project" value="UniProtKB-UniRule"/>
</dbReference>
<dbReference type="GO" id="GO:0033290">
    <property type="term" value="C:eukaryotic 48S preinitiation complex"/>
    <property type="evidence" value="ECO:0007669"/>
    <property type="project" value="UniProtKB-UniRule"/>
</dbReference>
<dbReference type="GO" id="GO:0071541">
    <property type="term" value="C:eukaryotic translation initiation factor 3 complex, eIF3m"/>
    <property type="evidence" value="ECO:0007669"/>
    <property type="project" value="UniProtKB-UniRule"/>
</dbReference>
<dbReference type="GO" id="GO:0005794">
    <property type="term" value="C:Golgi apparatus"/>
    <property type="evidence" value="ECO:0007669"/>
    <property type="project" value="UniProtKB-SubCell"/>
</dbReference>
<dbReference type="GO" id="GO:0003743">
    <property type="term" value="F:translation initiation factor activity"/>
    <property type="evidence" value="ECO:0007669"/>
    <property type="project" value="UniProtKB-UniRule"/>
</dbReference>
<dbReference type="GO" id="GO:0001732">
    <property type="term" value="P:formation of cytoplasmic translation initiation complex"/>
    <property type="evidence" value="ECO:0007669"/>
    <property type="project" value="UniProtKB-UniRule"/>
</dbReference>
<dbReference type="HAMAP" id="MF_03012">
    <property type="entry name" value="eIF3m"/>
    <property type="match status" value="1"/>
</dbReference>
<dbReference type="InterPro" id="IPR016024">
    <property type="entry name" value="ARM-type_fold"/>
</dbReference>
<dbReference type="InterPro" id="IPR045237">
    <property type="entry name" value="COPS7/eIF3m"/>
</dbReference>
<dbReference type="InterPro" id="IPR027528">
    <property type="entry name" value="eIF3m"/>
</dbReference>
<dbReference type="InterPro" id="IPR040750">
    <property type="entry name" value="eIF3m_C_helix"/>
</dbReference>
<dbReference type="InterPro" id="IPR000717">
    <property type="entry name" value="PCI_dom"/>
</dbReference>
<dbReference type="InterPro" id="IPR036390">
    <property type="entry name" value="WH_DNA-bd_sf"/>
</dbReference>
<dbReference type="PANTHER" id="PTHR15350">
    <property type="entry name" value="COP9 SIGNALOSOME COMPLEX SUBUNIT 7/DENDRITIC CELL PROTEIN GA17"/>
    <property type="match status" value="1"/>
</dbReference>
<dbReference type="PANTHER" id="PTHR15350:SF2">
    <property type="entry name" value="EUKARYOTIC TRANSLATION INITIATION FACTOR 3 SUBUNIT M"/>
    <property type="match status" value="1"/>
</dbReference>
<dbReference type="Pfam" id="PF18005">
    <property type="entry name" value="eIF3m_C_helix"/>
    <property type="match status" value="1"/>
</dbReference>
<dbReference type="Pfam" id="PF01399">
    <property type="entry name" value="PCI"/>
    <property type="match status" value="1"/>
</dbReference>
<dbReference type="SMART" id="SM00088">
    <property type="entry name" value="PINT"/>
    <property type="match status" value="1"/>
</dbReference>
<dbReference type="SUPFAM" id="SSF48371">
    <property type="entry name" value="ARM repeat"/>
    <property type="match status" value="1"/>
</dbReference>
<dbReference type="SUPFAM" id="SSF46785">
    <property type="entry name" value="Winged helix' DNA-binding domain"/>
    <property type="match status" value="1"/>
</dbReference>
<dbReference type="PROSITE" id="PS50250">
    <property type="entry name" value="PCI"/>
    <property type="match status" value="1"/>
</dbReference>
<organism>
    <name type="scientific">Drosophila mojavensis</name>
    <name type="common">Fruit fly</name>
    <dbReference type="NCBI Taxonomy" id="7230"/>
    <lineage>
        <taxon>Eukaryota</taxon>
        <taxon>Metazoa</taxon>
        <taxon>Ecdysozoa</taxon>
        <taxon>Arthropoda</taxon>
        <taxon>Hexapoda</taxon>
        <taxon>Insecta</taxon>
        <taxon>Pterygota</taxon>
        <taxon>Neoptera</taxon>
        <taxon>Endopterygota</taxon>
        <taxon>Diptera</taxon>
        <taxon>Brachycera</taxon>
        <taxon>Muscomorpha</taxon>
        <taxon>Ephydroidea</taxon>
        <taxon>Drosophilidae</taxon>
        <taxon>Drosophila</taxon>
    </lineage>
</organism>
<reference key="1">
    <citation type="journal article" date="2007" name="Nature">
        <title>Evolution of genes and genomes on the Drosophila phylogeny.</title>
        <authorList>
            <consortium name="Drosophila 12 genomes consortium"/>
        </authorList>
    </citation>
    <scope>NUCLEOTIDE SEQUENCE [LARGE SCALE GENOMIC DNA]</scope>
    <source>
        <strain>Tucson 15081-1352.22</strain>
    </source>
</reference>
<accession>B4KT65</accession>
<name>EIF3M_DROMO</name>
<feature type="chain" id="PRO_0000366001" description="Eukaryotic translation initiation factor 3 subunit M">
    <location>
        <begin position="1"/>
        <end position="387"/>
    </location>
</feature>
<feature type="domain" description="PCI" evidence="2">
    <location>
        <begin position="181"/>
        <end position="340"/>
    </location>
</feature>